<accession>Q9FLR3</accession>
<accession>B2CTN9</accession>
<accession>Q8LAN9</accession>
<evidence type="ECO:0000255" key="1">
    <source>
        <dbReference type="PROSITE-ProRule" id="PRU00353"/>
    </source>
</evidence>
<evidence type="ECO:0000269" key="2">
    <source>
    </source>
</evidence>
<evidence type="ECO:0000269" key="3">
    <source>
    </source>
</evidence>
<evidence type="ECO:0000269" key="4">
    <source>
    </source>
</evidence>
<evidence type="ECO:0000303" key="5">
    <source>
    </source>
</evidence>
<evidence type="ECO:0000303" key="6">
    <source>
    </source>
</evidence>
<evidence type="ECO:0000305" key="7">
    <source>
    </source>
</evidence>
<evidence type="ECO:0000312" key="8">
    <source>
        <dbReference type="Araport" id="AT5G07680"/>
    </source>
</evidence>
<evidence type="ECO:0000312" key="9">
    <source>
        <dbReference type="EMBL" id="BAB11446.1"/>
    </source>
</evidence>
<keyword id="KW-0025">Alternative splicing</keyword>
<keyword id="KW-0238">DNA-binding</keyword>
<keyword id="KW-0539">Nucleus</keyword>
<keyword id="KW-1185">Reference proteome</keyword>
<keyword id="KW-0804">Transcription</keyword>
<keyword id="KW-0805">Transcription regulation</keyword>
<sequence length="329" mass="37518">METFGVFHKEDDEQMDLPPGFRFHPTDEELITHYLHKKVLDLGFSAKAIGEVDLNKAEPWELPYKAKIGEKEWYFFCVRDRKYPTGLRTNRATQAGYWKATGKDKEIFRGKSLVGMKKTLVFYRGRAPKGQKTNWVMHEYRLDGKLSAHNLPKTAKNEWVICRVFHKTAGGKKIPISTLIRIGSYGTGSSLPPLTDSSPYNDKTKTEPVYVPCFSNQAETRGTILNCFSNPSLSSIQPDFLQMIPLYQPQSLNISESSNPVLTQEQSVLQAMMENNRRQNFKTLSISQETGVSNTDNSSVFEFGRKRFDHQEVPSPSSGPVDLEPFWNY</sequence>
<comment type="subcellular location">
    <subcellularLocation>
        <location evidence="1">Nucleus</location>
    </subcellularLocation>
</comment>
<comment type="alternative products">
    <event type="alternative splicing"/>
    <isoform>
        <id>Q9FLR3-1</id>
        <name>1</name>
        <sequence type="displayed"/>
    </isoform>
    <isoform>
        <id>Q9FLR3-2</id>
        <name>2</name>
        <name evidence="5">NAC080</name>
        <sequence type="described" ref="VSP_058070"/>
    </isoform>
</comment>
<comment type="tissue specificity">
    <text evidence="3">Expressed at low levels in leaves.</text>
</comment>
<comment type="induction">
    <text evidence="2 3 4 7">Repressed post-transcriptionally by miR164.</text>
</comment>
<comment type="domain">
    <text evidence="1">The NAC domain includes a DNA binding domain and a dimerization domain.</text>
</comment>
<reference key="1">
    <citation type="journal article" date="1998" name="DNA Res.">
        <title>Structural analysis of Arabidopsis thaliana chromosome 5. IV. Sequence features of the regions of 1,456,315 bp covered by nineteen physically assigned P1 and TAC clones.</title>
        <authorList>
            <person name="Sato S."/>
            <person name="Kaneko T."/>
            <person name="Kotani H."/>
            <person name="Nakamura Y."/>
            <person name="Asamizu E."/>
            <person name="Miyajima N."/>
            <person name="Tabata S."/>
        </authorList>
    </citation>
    <scope>NUCLEOTIDE SEQUENCE [LARGE SCALE GENOMIC DNA]</scope>
    <source>
        <strain>cv. Columbia</strain>
    </source>
</reference>
<reference key="2">
    <citation type="journal article" date="2017" name="Plant J.">
        <title>Araport11: a complete reannotation of the Arabidopsis thaliana reference genome.</title>
        <authorList>
            <person name="Cheng C.Y."/>
            <person name="Krishnakumar V."/>
            <person name="Chan A.P."/>
            <person name="Thibaud-Nissen F."/>
            <person name="Schobel S."/>
            <person name="Town C.D."/>
        </authorList>
    </citation>
    <scope>GENOME REANNOTATION</scope>
    <source>
        <strain>cv. Columbia</strain>
    </source>
</reference>
<reference key="3">
    <citation type="journal article" date="2003" name="Science">
        <title>Empirical analysis of transcriptional activity in the Arabidopsis genome.</title>
        <authorList>
            <person name="Yamada K."/>
            <person name="Lim J."/>
            <person name="Dale J.M."/>
            <person name="Chen H."/>
            <person name="Shinn P."/>
            <person name="Palm C.J."/>
            <person name="Southwick A.M."/>
            <person name="Wu H.C."/>
            <person name="Kim C.J."/>
            <person name="Nguyen M."/>
            <person name="Pham P.K."/>
            <person name="Cheuk R.F."/>
            <person name="Karlin-Newmann G."/>
            <person name="Liu S.X."/>
            <person name="Lam B."/>
            <person name="Sakano H."/>
            <person name="Wu T."/>
            <person name="Yu G."/>
            <person name="Miranda M."/>
            <person name="Quach H.L."/>
            <person name="Tripp M."/>
            <person name="Chang C.H."/>
            <person name="Lee J.M."/>
            <person name="Toriumi M.J."/>
            <person name="Chan M.M."/>
            <person name="Tang C.C."/>
            <person name="Onodera C.S."/>
            <person name="Deng J.M."/>
            <person name="Akiyama K."/>
            <person name="Ansari Y."/>
            <person name="Arakawa T."/>
            <person name="Banh J."/>
            <person name="Banno F."/>
            <person name="Bowser L."/>
            <person name="Brooks S.Y."/>
            <person name="Carninci P."/>
            <person name="Chao Q."/>
            <person name="Choy N."/>
            <person name="Enju A."/>
            <person name="Goldsmith A.D."/>
            <person name="Gurjal M."/>
            <person name="Hansen N.F."/>
            <person name="Hayashizaki Y."/>
            <person name="Johnson-Hopson C."/>
            <person name="Hsuan V.W."/>
            <person name="Iida K."/>
            <person name="Karnes M."/>
            <person name="Khan S."/>
            <person name="Koesema E."/>
            <person name="Ishida J."/>
            <person name="Jiang P.X."/>
            <person name="Jones T."/>
            <person name="Kawai J."/>
            <person name="Kamiya A."/>
            <person name="Meyers C."/>
            <person name="Nakajima M."/>
            <person name="Narusaka M."/>
            <person name="Seki M."/>
            <person name="Sakurai T."/>
            <person name="Satou M."/>
            <person name="Tamse R."/>
            <person name="Vaysberg M."/>
            <person name="Wallender E.K."/>
            <person name="Wong C."/>
            <person name="Yamamura Y."/>
            <person name="Yuan S."/>
            <person name="Shinozaki K."/>
            <person name="Davis R.W."/>
            <person name="Theologis A."/>
            <person name="Ecker J.R."/>
        </authorList>
    </citation>
    <scope>NUCLEOTIDE SEQUENCE [LARGE SCALE MRNA] (ISOFORM 1)</scope>
    <source>
        <strain>cv. Columbia</strain>
    </source>
</reference>
<reference key="4">
    <citation type="submission" date="2006-07" db="EMBL/GenBank/DDBJ databases">
        <title>Large-scale analysis of RIKEN Arabidopsis full-length (RAFL) cDNAs.</title>
        <authorList>
            <person name="Totoki Y."/>
            <person name="Seki M."/>
            <person name="Ishida J."/>
            <person name="Nakajima M."/>
            <person name="Enju A."/>
            <person name="Kamiya A."/>
            <person name="Narusaka M."/>
            <person name="Shin-i T."/>
            <person name="Nakagawa M."/>
            <person name="Sakamoto N."/>
            <person name="Oishi K."/>
            <person name="Kohara Y."/>
            <person name="Kobayashi M."/>
            <person name="Toyoda A."/>
            <person name="Sakaki Y."/>
            <person name="Sakurai T."/>
            <person name="Iida K."/>
            <person name="Akiyama K."/>
            <person name="Satou M."/>
            <person name="Toyoda T."/>
            <person name="Konagaya A."/>
            <person name="Carninci P."/>
            <person name="Kawai J."/>
            <person name="Hayashizaki Y."/>
            <person name="Shinozaki K."/>
        </authorList>
    </citation>
    <scope>NUCLEOTIDE SEQUENCE [LARGE SCALE MRNA] (ISOFORM 1)</scope>
    <source>
        <strain>cv. Columbia</strain>
    </source>
</reference>
<reference key="5">
    <citation type="submission" date="2002-03" db="EMBL/GenBank/DDBJ databases">
        <title>Full-length cDNA from Arabidopsis thaliana.</title>
        <authorList>
            <person name="Brover V.V."/>
            <person name="Troukhan M.E."/>
            <person name="Alexandrov N.A."/>
            <person name="Lu Y.-P."/>
            <person name="Flavell R.B."/>
            <person name="Feldmann K.A."/>
        </authorList>
    </citation>
    <scope>NUCLEOTIDE SEQUENCE [LARGE SCALE MRNA] (ISOFORM 2)</scope>
</reference>
<reference key="6">
    <citation type="journal article" date="2008" name="Plant Physiol.">
        <title>Sequence variation of microRNAs and their binding sites in Arabidopsis.</title>
        <authorList>
            <person name="Ehrenreich I.M."/>
            <person name="Purugganan M.D."/>
        </authorList>
    </citation>
    <scope>NUCLEOTIDE SEQUENCE [GENOMIC DNA] OF 170-309</scope>
    <scope>REGULATION BY MIR164</scope>
    <source>
        <strain>cv. Ag-0</strain>
        <strain>cv. An-1</strain>
        <strain>cv. Bay-0</strain>
        <strain>cv. Br-0</strain>
        <strain>cv. C24</strain>
        <strain>cv. Ct-1</strain>
        <strain>cv. Cvi-0</strain>
        <strain>cv. Ei-2</strain>
        <strain>cv. Ga-0</strain>
        <strain>cv. Gy-0</strain>
        <strain>cv. Ll-0</strain>
        <strain>cv. Mrk-0</strain>
        <strain>cv. Ms-0</strain>
        <strain>cv. Mt-0</strain>
        <strain>cv. Nd-1</strain>
        <strain>cv. Nok-3</strain>
        <strain>cv. Oy-0</strain>
        <strain>cv. Sorbo</strain>
        <strain>cv. Wa-1</strain>
        <strain>cv. Wassilewskija</strain>
        <strain>cv. Wei-0</strain>
        <strain>cv. Wt-5</strain>
    </source>
</reference>
<reference key="7">
    <citation type="journal article" date="2003" name="DNA Res.">
        <title>Comprehensive analysis of NAC family genes in Oryza sativa and Arabidopsis thaliana.</title>
        <authorList>
            <person name="Ooka H."/>
            <person name="Satoh K."/>
            <person name="Doi K."/>
            <person name="Nagata T."/>
            <person name="Otomo Y."/>
            <person name="Murakami K."/>
            <person name="Matsubara K."/>
            <person name="Osato N."/>
            <person name="Kawai J."/>
            <person name="Carninci P."/>
            <person name="Hayashizaki Y."/>
            <person name="Suzuki K."/>
            <person name="Kojima K."/>
            <person name="Takahara Y."/>
            <person name="Yamamoto K."/>
            <person name="Kikuchi S."/>
        </authorList>
    </citation>
    <scope>GENE FAMILY</scope>
    <scope>NOMENCLATURE</scope>
</reference>
<reference key="8">
    <citation type="journal article" date="2004" name="Development">
        <title>MicroRNA regulation of the CUC genes is required for boundary size control in Arabidopsis meristems.</title>
        <authorList>
            <person name="Laufs P."/>
            <person name="Peaucelle A."/>
            <person name="Morin H."/>
            <person name="Traas J."/>
        </authorList>
    </citation>
    <scope>INDUCTION</scope>
</reference>
<reference key="9">
    <citation type="journal article" date="2005" name="Curr. Biol.">
        <title>The early extra petals1 mutant uncovers a role for microRNA miR164c in regulating petal number in Arabidopsis.</title>
        <authorList>
            <person name="Baker C.C."/>
            <person name="Sieber P."/>
            <person name="Wellmer F."/>
            <person name="Meyerowitz E.M."/>
        </authorList>
    </citation>
    <scope>INDUCTION</scope>
</reference>
<reference key="10">
    <citation type="journal article" date="2006" name="Plant Cell">
        <title>The balance between the MIR164A and CUC2 genes controls leaf margin serration in Arabidopsis.</title>
        <authorList>
            <person name="Nikovics K."/>
            <person name="Blein T."/>
            <person name="Peaucelle A."/>
            <person name="Ishida T."/>
            <person name="Morin H."/>
            <person name="Aida M."/>
            <person name="Laufs P."/>
        </authorList>
    </citation>
    <scope>TISSUE SPECIFICITY</scope>
    <scope>REGULATION BY MIR164</scope>
</reference>
<gene>
    <name evidence="5" type="primary">NAC079</name>
    <name evidence="6" type="synonym">TGT2</name>
    <name evidence="8" type="ordered locus">At5g07680</name>
    <name evidence="9" type="ORF">MBK20.13</name>
</gene>
<name>NAC79_ARATH</name>
<feature type="chain" id="PRO_0000435409" description="NAC domain-containing protein 79">
    <location>
        <begin position="1"/>
        <end position="329"/>
    </location>
</feature>
<feature type="domain" description="NAC" evidence="1">
    <location>
        <begin position="17"/>
        <end position="167"/>
    </location>
</feature>
<feature type="DNA-binding region" evidence="1">
    <location>
        <begin position="114"/>
        <end position="173"/>
    </location>
</feature>
<feature type="splice variant" id="VSP_058070" description="In isoform 2.">
    <location>
        <begin position="1"/>
        <end position="14"/>
    </location>
</feature>
<protein>
    <recommendedName>
        <fullName evidence="5">NAC domain-containing protein 79</fullName>
        <shortName evidence="5">ANAC79</shortName>
        <shortName evidence="5">ANAC80</shortName>
        <shortName evidence="5">AtNAC79</shortName>
        <shortName evidence="5">AtNAC80</shortName>
    </recommendedName>
</protein>
<dbReference type="EMBL" id="AB010070">
    <property type="protein sequence ID" value="BAB11446.1"/>
    <property type="molecule type" value="Genomic_DNA"/>
</dbReference>
<dbReference type="EMBL" id="CP002688">
    <property type="protein sequence ID" value="AED91192.1"/>
    <property type="molecule type" value="Genomic_DNA"/>
</dbReference>
<dbReference type="EMBL" id="CP002688">
    <property type="protein sequence ID" value="AED91193.1"/>
    <property type="molecule type" value="Genomic_DNA"/>
</dbReference>
<dbReference type="EMBL" id="BT006419">
    <property type="protein sequence ID" value="AAP21227.1"/>
    <property type="molecule type" value="mRNA"/>
</dbReference>
<dbReference type="EMBL" id="AK228027">
    <property type="protein sequence ID" value="BAE99988.1"/>
    <property type="molecule type" value="mRNA"/>
</dbReference>
<dbReference type="EMBL" id="AY087700">
    <property type="protein sequence ID" value="AAM65237.1"/>
    <property type="molecule type" value="mRNA"/>
</dbReference>
<dbReference type="EMBL" id="EU550240">
    <property type="protein sequence ID" value="ACB31002.1"/>
    <property type="molecule type" value="Genomic_DNA"/>
</dbReference>
<dbReference type="EMBL" id="EU550263">
    <property type="protein sequence ID" value="ACB31025.1"/>
    <property type="molecule type" value="Genomic_DNA"/>
</dbReference>
<dbReference type="EMBL" id="EU550241">
    <property type="protein sequence ID" value="ACB31003.1"/>
    <property type="molecule type" value="Genomic_DNA"/>
</dbReference>
<dbReference type="EMBL" id="EU550243">
    <property type="protein sequence ID" value="ACB31005.1"/>
    <property type="molecule type" value="Genomic_DNA"/>
</dbReference>
<dbReference type="EMBL" id="EU550244">
    <property type="protein sequence ID" value="ACB31006.1"/>
    <property type="molecule type" value="Genomic_DNA"/>
</dbReference>
<dbReference type="EMBL" id="EU550247">
    <property type="protein sequence ID" value="ACB31009.1"/>
    <property type="molecule type" value="Genomic_DNA"/>
</dbReference>
<dbReference type="EMBL" id="EU550245">
    <property type="protein sequence ID" value="ACB31007.1"/>
    <property type="molecule type" value="Genomic_DNA"/>
</dbReference>
<dbReference type="EMBL" id="EU550248">
    <property type="protein sequence ID" value="ACB31010.1"/>
    <property type="molecule type" value="Genomic_DNA"/>
</dbReference>
<dbReference type="EMBL" id="EU550249">
    <property type="protein sequence ID" value="ACB31011.1"/>
    <property type="molecule type" value="Genomic_DNA"/>
</dbReference>
<dbReference type="EMBL" id="EU550250">
    <property type="protein sequence ID" value="ACB31012.1"/>
    <property type="molecule type" value="Genomic_DNA"/>
</dbReference>
<dbReference type="EMBL" id="EU550251">
    <property type="protein sequence ID" value="ACB31013.1"/>
    <property type="molecule type" value="Genomic_DNA"/>
</dbReference>
<dbReference type="EMBL" id="EU550252">
    <property type="protein sequence ID" value="ACB31014.1"/>
    <property type="molecule type" value="Genomic_DNA"/>
</dbReference>
<dbReference type="EMBL" id="EU550253">
    <property type="protein sequence ID" value="ACB31015.1"/>
    <property type="molecule type" value="Genomic_DNA"/>
</dbReference>
<dbReference type="EMBL" id="EU550254">
    <property type="protein sequence ID" value="ACB31016.1"/>
    <property type="molecule type" value="Genomic_DNA"/>
</dbReference>
<dbReference type="EMBL" id="EU550255">
    <property type="protein sequence ID" value="ACB31017.1"/>
    <property type="molecule type" value="Genomic_DNA"/>
</dbReference>
<dbReference type="EMBL" id="EU550256">
    <property type="protein sequence ID" value="ACB31018.1"/>
    <property type="molecule type" value="Genomic_DNA"/>
</dbReference>
<dbReference type="EMBL" id="EU550257">
    <property type="protein sequence ID" value="ACB31019.1"/>
    <property type="molecule type" value="Genomic_DNA"/>
</dbReference>
<dbReference type="EMBL" id="EU550258">
    <property type="protein sequence ID" value="ACB31020.1"/>
    <property type="molecule type" value="Genomic_DNA"/>
</dbReference>
<dbReference type="EMBL" id="EU550259">
    <property type="protein sequence ID" value="ACB31021.1"/>
    <property type="molecule type" value="Genomic_DNA"/>
</dbReference>
<dbReference type="EMBL" id="EU550260">
    <property type="protein sequence ID" value="ACB31022.1"/>
    <property type="molecule type" value="Genomic_DNA"/>
</dbReference>
<dbReference type="EMBL" id="EU550261">
    <property type="protein sequence ID" value="ACB31023.1"/>
    <property type="molecule type" value="Genomic_DNA"/>
</dbReference>
<dbReference type="EMBL" id="EU550262">
    <property type="protein sequence ID" value="ACB31024.1"/>
    <property type="molecule type" value="Genomic_DNA"/>
</dbReference>
<dbReference type="RefSeq" id="NP_568182.2">
    <molecule id="Q9FLR3-1"/>
    <property type="nucleotide sequence ID" value="NM_120850.4"/>
</dbReference>
<dbReference type="RefSeq" id="NP_850789.1">
    <molecule id="Q9FLR3-2"/>
    <property type="nucleotide sequence ID" value="NM_180458.1"/>
</dbReference>
<dbReference type="SMR" id="Q9FLR3"/>
<dbReference type="FunCoup" id="Q9FLR3">
    <property type="interactions" value="233"/>
</dbReference>
<dbReference type="STRING" id="3702.Q9FLR3"/>
<dbReference type="PaxDb" id="3702-AT5G07680.1"/>
<dbReference type="ProteomicsDB" id="251314">
    <molecule id="Q9FLR3-1"/>
</dbReference>
<dbReference type="DNASU" id="830661"/>
<dbReference type="EnsemblPlants" id="AT5G07680.1">
    <molecule id="Q9FLR3-1"/>
    <property type="protein sequence ID" value="AT5G07680.1"/>
    <property type="gene ID" value="AT5G07680"/>
</dbReference>
<dbReference type="EnsemblPlants" id="AT5G07680.2">
    <molecule id="Q9FLR3-2"/>
    <property type="protein sequence ID" value="AT5G07680.2"/>
    <property type="gene ID" value="AT5G07680"/>
</dbReference>
<dbReference type="GeneID" id="830661"/>
<dbReference type="Gramene" id="AT5G07680.1">
    <molecule id="Q9FLR3-1"/>
    <property type="protein sequence ID" value="AT5G07680.1"/>
    <property type="gene ID" value="AT5G07680"/>
</dbReference>
<dbReference type="Gramene" id="AT5G07680.2">
    <molecule id="Q9FLR3-2"/>
    <property type="protein sequence ID" value="AT5G07680.2"/>
    <property type="gene ID" value="AT5G07680"/>
</dbReference>
<dbReference type="KEGG" id="ath:AT5G07680"/>
<dbReference type="Araport" id="AT5G07680"/>
<dbReference type="TAIR" id="AT5G07680">
    <property type="gene designation" value="NAC080"/>
</dbReference>
<dbReference type="eggNOG" id="ENOG502QR2M">
    <property type="taxonomic scope" value="Eukaryota"/>
</dbReference>
<dbReference type="InParanoid" id="Q9FLR3"/>
<dbReference type="OrthoDB" id="1424968at2759"/>
<dbReference type="PhylomeDB" id="Q9FLR3"/>
<dbReference type="PRO" id="PR:Q9FLR3"/>
<dbReference type="Proteomes" id="UP000006548">
    <property type="component" value="Chromosome 5"/>
</dbReference>
<dbReference type="ExpressionAtlas" id="Q9FLR3">
    <property type="expression patterns" value="baseline and differential"/>
</dbReference>
<dbReference type="GO" id="GO:0005634">
    <property type="term" value="C:nucleus"/>
    <property type="evidence" value="ECO:0007669"/>
    <property type="project" value="UniProtKB-SubCell"/>
</dbReference>
<dbReference type="GO" id="GO:0003700">
    <property type="term" value="F:DNA-binding transcription factor activity"/>
    <property type="evidence" value="ECO:0000250"/>
    <property type="project" value="TAIR"/>
</dbReference>
<dbReference type="GO" id="GO:0000976">
    <property type="term" value="F:transcription cis-regulatory region binding"/>
    <property type="evidence" value="ECO:0000353"/>
    <property type="project" value="TAIR"/>
</dbReference>
<dbReference type="FunFam" id="2.170.150.80:FF:000006">
    <property type="entry name" value="NAC domain-containing protein 100-like"/>
    <property type="match status" value="1"/>
</dbReference>
<dbReference type="Gene3D" id="2.170.150.80">
    <property type="entry name" value="NAC domain"/>
    <property type="match status" value="1"/>
</dbReference>
<dbReference type="InterPro" id="IPR003441">
    <property type="entry name" value="NAC-dom"/>
</dbReference>
<dbReference type="InterPro" id="IPR036093">
    <property type="entry name" value="NAC_dom_sf"/>
</dbReference>
<dbReference type="PANTHER" id="PTHR31744:SF89">
    <property type="entry name" value="NAC DOMAIN-CONTAINING PROTEIN 79"/>
    <property type="match status" value="1"/>
</dbReference>
<dbReference type="PANTHER" id="PTHR31744">
    <property type="entry name" value="PROTEIN CUP-SHAPED COTYLEDON 2-RELATED"/>
    <property type="match status" value="1"/>
</dbReference>
<dbReference type="Pfam" id="PF02365">
    <property type="entry name" value="NAM"/>
    <property type="match status" value="1"/>
</dbReference>
<dbReference type="SUPFAM" id="SSF101941">
    <property type="entry name" value="NAC domain"/>
    <property type="match status" value="1"/>
</dbReference>
<dbReference type="PROSITE" id="PS51005">
    <property type="entry name" value="NAC"/>
    <property type="match status" value="1"/>
</dbReference>
<organism>
    <name type="scientific">Arabidopsis thaliana</name>
    <name type="common">Mouse-ear cress</name>
    <dbReference type="NCBI Taxonomy" id="3702"/>
    <lineage>
        <taxon>Eukaryota</taxon>
        <taxon>Viridiplantae</taxon>
        <taxon>Streptophyta</taxon>
        <taxon>Embryophyta</taxon>
        <taxon>Tracheophyta</taxon>
        <taxon>Spermatophyta</taxon>
        <taxon>Magnoliopsida</taxon>
        <taxon>eudicotyledons</taxon>
        <taxon>Gunneridae</taxon>
        <taxon>Pentapetalae</taxon>
        <taxon>rosids</taxon>
        <taxon>malvids</taxon>
        <taxon>Brassicales</taxon>
        <taxon>Brassicaceae</taxon>
        <taxon>Camelineae</taxon>
        <taxon>Arabidopsis</taxon>
    </lineage>
</organism>
<proteinExistence type="evidence at transcript level"/>